<organism>
    <name type="scientific">Arabidopsis thaliana</name>
    <name type="common">Mouse-ear cress</name>
    <dbReference type="NCBI Taxonomy" id="3702"/>
    <lineage>
        <taxon>Eukaryota</taxon>
        <taxon>Viridiplantae</taxon>
        <taxon>Streptophyta</taxon>
        <taxon>Embryophyta</taxon>
        <taxon>Tracheophyta</taxon>
        <taxon>Spermatophyta</taxon>
        <taxon>Magnoliopsida</taxon>
        <taxon>eudicotyledons</taxon>
        <taxon>Gunneridae</taxon>
        <taxon>Pentapetalae</taxon>
        <taxon>rosids</taxon>
        <taxon>malvids</taxon>
        <taxon>Brassicales</taxon>
        <taxon>Brassicaceae</taxon>
        <taxon>Camelineae</taxon>
        <taxon>Arabidopsis</taxon>
    </lineage>
</organism>
<sequence>MEEKNYDDGDTVTVDDDYQMGCTTPTRDDCRIPAYPPCPPPVRRKRSLLGFGKKREPPKKGYFQPPDLDLFFSVVAASQAAT</sequence>
<keyword id="KW-0131">Cell cycle</keyword>
<keyword id="KW-0649">Protein kinase inhibitor</keyword>
<keyword id="KW-1185">Reference proteome</keyword>
<reference key="1">
    <citation type="journal article" date="2000" name="Nature">
        <title>Sequence and analysis of chromosome 1 of the plant Arabidopsis thaliana.</title>
        <authorList>
            <person name="Theologis A."/>
            <person name="Ecker J.R."/>
            <person name="Palm C.J."/>
            <person name="Federspiel N.A."/>
            <person name="Kaul S."/>
            <person name="White O."/>
            <person name="Alonso J."/>
            <person name="Altafi H."/>
            <person name="Araujo R."/>
            <person name="Bowman C.L."/>
            <person name="Brooks S.Y."/>
            <person name="Buehler E."/>
            <person name="Chan A."/>
            <person name="Chao Q."/>
            <person name="Chen H."/>
            <person name="Cheuk R.F."/>
            <person name="Chin C.W."/>
            <person name="Chung M.K."/>
            <person name="Conn L."/>
            <person name="Conway A.B."/>
            <person name="Conway A.R."/>
            <person name="Creasy T.H."/>
            <person name="Dewar K."/>
            <person name="Dunn P."/>
            <person name="Etgu P."/>
            <person name="Feldblyum T.V."/>
            <person name="Feng J.-D."/>
            <person name="Fong B."/>
            <person name="Fujii C.Y."/>
            <person name="Gill J.E."/>
            <person name="Goldsmith A.D."/>
            <person name="Haas B."/>
            <person name="Hansen N.F."/>
            <person name="Hughes B."/>
            <person name="Huizar L."/>
            <person name="Hunter J.L."/>
            <person name="Jenkins J."/>
            <person name="Johnson-Hopson C."/>
            <person name="Khan S."/>
            <person name="Khaykin E."/>
            <person name="Kim C.J."/>
            <person name="Koo H.L."/>
            <person name="Kremenetskaia I."/>
            <person name="Kurtz D.B."/>
            <person name="Kwan A."/>
            <person name="Lam B."/>
            <person name="Langin-Hooper S."/>
            <person name="Lee A."/>
            <person name="Lee J.M."/>
            <person name="Lenz C.A."/>
            <person name="Li J.H."/>
            <person name="Li Y.-P."/>
            <person name="Lin X."/>
            <person name="Liu S.X."/>
            <person name="Liu Z.A."/>
            <person name="Luros J.S."/>
            <person name="Maiti R."/>
            <person name="Marziali A."/>
            <person name="Militscher J."/>
            <person name="Miranda M."/>
            <person name="Nguyen M."/>
            <person name="Nierman W.C."/>
            <person name="Osborne B.I."/>
            <person name="Pai G."/>
            <person name="Peterson J."/>
            <person name="Pham P.K."/>
            <person name="Rizzo M."/>
            <person name="Rooney T."/>
            <person name="Rowley D."/>
            <person name="Sakano H."/>
            <person name="Salzberg S.L."/>
            <person name="Schwartz J.R."/>
            <person name="Shinn P."/>
            <person name="Southwick A.M."/>
            <person name="Sun H."/>
            <person name="Tallon L.J."/>
            <person name="Tambunga G."/>
            <person name="Toriumi M.J."/>
            <person name="Town C.D."/>
            <person name="Utterback T."/>
            <person name="Van Aken S."/>
            <person name="Vaysberg M."/>
            <person name="Vysotskaia V.S."/>
            <person name="Walker M."/>
            <person name="Wu D."/>
            <person name="Yu G."/>
            <person name="Fraser C.M."/>
            <person name="Venter J.C."/>
            <person name="Davis R.W."/>
        </authorList>
    </citation>
    <scope>NUCLEOTIDE SEQUENCE [LARGE SCALE GENOMIC DNA]</scope>
    <source>
        <strain>cv. Columbia</strain>
    </source>
</reference>
<reference key="2">
    <citation type="journal article" date="2017" name="Plant J.">
        <title>Araport11: a complete reannotation of the Arabidopsis thaliana reference genome.</title>
        <authorList>
            <person name="Cheng C.Y."/>
            <person name="Krishnakumar V."/>
            <person name="Chan A.P."/>
            <person name="Thibaud-Nissen F."/>
            <person name="Schobel S."/>
            <person name="Town C.D."/>
        </authorList>
    </citation>
    <scope>GENOME REANNOTATION</scope>
    <source>
        <strain>cv. Columbia</strain>
    </source>
</reference>
<reference key="3">
    <citation type="journal article" date="2006" name="Plant J.">
        <title>ATR and ATM play both distinct and additive roles in response to ionizing radiation.</title>
        <authorList>
            <person name="Culligan K.M."/>
            <person name="Robertson C.E."/>
            <person name="Foreman J."/>
            <person name="Doerner P."/>
            <person name="Britt A.B."/>
        </authorList>
    </citation>
    <scope>INDUCTION BY DOUBLE-STRANDED DNA BREAKS-INDUCING TREATMENTS</scope>
</reference>
<reference key="4">
    <citation type="journal article" date="2007" name="J. Biol. Chem.">
        <title>Novel plant-specific cyclin-dependent kinase inhibitors induced by biotic and abiotic stresses.</title>
        <authorList>
            <person name="Peres A."/>
            <person name="Churchman M.L."/>
            <person name="Hariharan S."/>
            <person name="Himanen K."/>
            <person name="Verkest A."/>
            <person name="Vandepoele K."/>
            <person name="Magyar Z."/>
            <person name="Hatzfeld Y."/>
            <person name="Van Der Schueren E."/>
            <person name="Beemster G.T."/>
            <person name="Frankard V."/>
            <person name="Larkin J.C."/>
            <person name="Inze D."/>
            <person name="De Veylder L."/>
        </authorList>
    </citation>
    <scope>GENE FAMILY</scope>
    <scope>NOMENCLATURE</scope>
</reference>
<reference key="5">
    <citation type="journal article" date="2010" name="Mol. Syst. Biol.">
        <title>Targeted interactomics reveals a complex core cell cycle machinery in Arabidopsis thaliana.</title>
        <authorList>
            <person name="Van Leene J."/>
            <person name="Hollunder J."/>
            <person name="Eeckhout D."/>
            <person name="Persiau G."/>
            <person name="Van De Slijke E."/>
            <person name="Stals H."/>
            <person name="Van Isterdael G."/>
            <person name="Verkest A."/>
            <person name="Neirynck S."/>
            <person name="Buffel Y."/>
            <person name="De Bodt S."/>
            <person name="Maere S."/>
            <person name="Laukens K."/>
            <person name="Pharazyn A."/>
            <person name="Ferreira P.C.G."/>
            <person name="Eloy N."/>
            <person name="Renne C."/>
            <person name="Meyer C."/>
            <person name="Faure J.-D."/>
            <person name="Steinbrenner J."/>
            <person name="Beynon J."/>
            <person name="Larkin J.C."/>
            <person name="Van de Peer Y."/>
            <person name="Hilson P."/>
            <person name="Kuiper M."/>
            <person name="De Veylder L."/>
            <person name="Van Onckelen H."/>
            <person name="Inze D."/>
            <person name="Witters E."/>
            <person name="De Jaeger G."/>
        </authorList>
    </citation>
    <scope>INTERACTION WITH CDKA-1 AND D-TYPE CYCLINS</scope>
</reference>
<reference key="6">
    <citation type="journal article" date="2011" name="Proc. Natl. Acad. Sci. U.S.A.">
        <title>Programmed induction of endoreduplication by DNA double-strand breaks in Arabidopsis.</title>
        <authorList>
            <person name="Adachi S."/>
            <person name="Minamisawa K."/>
            <person name="Okushima Y."/>
            <person name="Inagaki S."/>
            <person name="Yoshiyama K."/>
            <person name="Kondou Y."/>
            <person name="Kaminuma E."/>
            <person name="Kawashima M."/>
            <person name="Toyoda T."/>
            <person name="Matsui M."/>
            <person name="Kurihara D."/>
            <person name="Matsunaga S."/>
            <person name="Umeda M."/>
        </authorList>
    </citation>
    <scope>INDUCTION BY ZEOCIN</scope>
</reference>
<reference key="7">
    <citation type="journal article" date="2014" name="Plant Cell">
        <title>The Arabidopsis SIAMESE-RELATED cyclin-dependent kinase inhibitors SMR5 and SMR7 regulate the DNA damage checkpoint in response to reactive oxygen species.</title>
        <authorList>
            <person name="Yi D."/>
            <person name="Alvim Kamei C.L."/>
            <person name="Cools T."/>
            <person name="Vanderauwera S."/>
            <person name="Takahashi N."/>
            <person name="Okushima Y."/>
            <person name="Eekhout T."/>
            <person name="Yoshiyama K.O."/>
            <person name="Larkin J."/>
            <person name="Van den Daele H."/>
            <person name="Conklin P."/>
            <person name="Britt A."/>
            <person name="Umeda M."/>
            <person name="De Veylder L."/>
        </authorList>
    </citation>
    <scope>FUNCTION</scope>
    <scope>TISSUE SPECIFICITY</scope>
    <scope>INDUCTION BY SOG1; DNA DAMAGE AND OXIDATIVE STRESS</scope>
    <scope>GENE FAMILY</scope>
    <scope>NOMENCLATURE</scope>
</reference>
<reference key="8">
    <citation type="journal article" date="2015" name="Mol. Plant">
        <title>Iron- and ferritin-dependent reactive oxygen species distribution: impact on Arabidopsis root system architecture.</title>
        <authorList>
            <person name="Reyt G."/>
            <person name="Boudouf S."/>
            <person name="Boucherez J."/>
            <person name="Gaymard F."/>
            <person name="Briat J.F."/>
        </authorList>
    </citation>
    <scope>INDUCTION BY IRON</scope>
</reference>
<reference key="9">
    <citation type="journal article" date="2015" name="Plant Cell">
        <title>Functional conservation in the SIAMESE-RELATED family of cyclin-dependent kinase inhibitors in land plants.</title>
        <authorList>
            <person name="Kumar N."/>
            <person name="Harashima H."/>
            <person name="Kalve S."/>
            <person name="Bramsiepe J."/>
            <person name="Wang K."/>
            <person name="Sizani B.L."/>
            <person name="Bertrand L.L."/>
            <person name="Johnson M.C."/>
            <person name="Faulk C."/>
            <person name="Dale R."/>
            <person name="Simmons L.A."/>
            <person name="Churchman M.L."/>
            <person name="Sugimoto K."/>
            <person name="Kato N."/>
            <person name="Dasanayake M."/>
            <person name="Beemster G."/>
            <person name="Schnittger A."/>
            <person name="Larkin J.C."/>
        </authorList>
    </citation>
    <scope>FUNCTION</scope>
    <scope>GENE FAMILY</scope>
    <scope>NOMENCLATURE</scope>
</reference>
<name>SMR5_ARATH</name>
<comment type="function">
    <text evidence="5 7">Probable cyclin-dependent protein kinase (CDK) inhibitor that functions as a repressor of mitosis in the endoreduplication cell cycle (PubMed:26546445). Acts as a potent cell cycle inhibitor, regulating a hydroxyurea-dependent checkpoint in leaves (PubMed:24399300). Essential to activate a high-light-dependent cell cycle checkpoint (PubMed:24399300).</text>
</comment>
<comment type="subunit">
    <text evidence="3">Interacts with CDKA-1 and D-type cyclins (PubMed:20706207).</text>
</comment>
<comment type="tissue specificity">
    <text evidence="5">Expressed in columella cells in the roots and in root meristems after induction.</text>
</comment>
<comment type="induction">
    <text evidence="2 4 5 6">Up-regulated by double-stranded DNA breaks-inducing treatments (PubMed:17227549). Up-regulated by zeocin treatment (PubMed:21613568). Up-regulated by DNA damage and oxidative stress (PubMed:24399300). Directly regulated by the transcription factor SOG1 (PubMed:24399300). Down-regulated by iron excess treatment (PubMed:25624148).</text>
</comment>
<dbReference type="EMBL" id="AC022464">
    <property type="protein sequence ID" value="AAF79549.1"/>
    <property type="molecule type" value="Genomic_DNA"/>
</dbReference>
<dbReference type="EMBL" id="CP002684">
    <property type="protein sequence ID" value="AEE28136.2"/>
    <property type="molecule type" value="Genomic_DNA"/>
</dbReference>
<dbReference type="RefSeq" id="NP_001318942.1">
    <property type="nucleotide sequence ID" value="NM_001331703.1"/>
</dbReference>
<dbReference type="FunCoup" id="Q9LNX4">
    <property type="interactions" value="2"/>
</dbReference>
<dbReference type="IntAct" id="Q9LNX4">
    <property type="interactions" value="3"/>
</dbReference>
<dbReference type="STRING" id="3702.Q9LNX4"/>
<dbReference type="EnsemblPlants" id="AT1G07500.1">
    <property type="protein sequence ID" value="AT1G07500.1"/>
    <property type="gene ID" value="AT1G07500"/>
</dbReference>
<dbReference type="GeneID" id="837264"/>
<dbReference type="Gramene" id="AT1G07500.1">
    <property type="protein sequence ID" value="AT1G07500.1"/>
    <property type="gene ID" value="AT1G07500"/>
</dbReference>
<dbReference type="KEGG" id="ath:AT1G07500"/>
<dbReference type="Araport" id="AT1G07500"/>
<dbReference type="TAIR" id="AT1G07500">
    <property type="gene designation" value="SMR5"/>
</dbReference>
<dbReference type="InParanoid" id="Q9LNX4"/>
<dbReference type="OMA" id="RGECRIP"/>
<dbReference type="PhylomeDB" id="Q9LNX4"/>
<dbReference type="PRO" id="PR:Q9LNX4"/>
<dbReference type="Proteomes" id="UP000006548">
    <property type="component" value="Chromosome 1"/>
</dbReference>
<dbReference type="ExpressionAtlas" id="Q9LNX4">
    <property type="expression patterns" value="differential"/>
</dbReference>
<dbReference type="GO" id="GO:0004860">
    <property type="term" value="F:protein kinase inhibitor activity"/>
    <property type="evidence" value="ECO:0007669"/>
    <property type="project" value="UniProtKB-KW"/>
</dbReference>
<dbReference type="GO" id="GO:0006974">
    <property type="term" value="P:DNA damage response"/>
    <property type="evidence" value="ECO:0000316"/>
    <property type="project" value="TAIR"/>
</dbReference>
<dbReference type="GO" id="GO:0032875">
    <property type="term" value="P:regulation of DNA endoreduplication"/>
    <property type="evidence" value="ECO:0007669"/>
    <property type="project" value="InterPro"/>
</dbReference>
<dbReference type="InterPro" id="IPR040389">
    <property type="entry name" value="SMR"/>
</dbReference>
<dbReference type="PANTHER" id="PTHR33142">
    <property type="entry name" value="CYCLIN-DEPENDENT PROTEIN KINASE INHIBITOR SMR13"/>
    <property type="match status" value="1"/>
</dbReference>
<dbReference type="PANTHER" id="PTHR33142:SF90">
    <property type="entry name" value="CYCLIN-DEPENDENT PROTEIN KINASE INHIBITOR SMR5"/>
    <property type="match status" value="1"/>
</dbReference>
<accession>Q9LNX4</accession>
<accession>F4HQP3</accession>
<evidence type="ECO:0000256" key="1">
    <source>
        <dbReference type="SAM" id="MobiDB-lite"/>
    </source>
</evidence>
<evidence type="ECO:0000269" key="2">
    <source>
    </source>
</evidence>
<evidence type="ECO:0000269" key="3">
    <source>
    </source>
</evidence>
<evidence type="ECO:0000269" key="4">
    <source>
    </source>
</evidence>
<evidence type="ECO:0000269" key="5">
    <source>
    </source>
</evidence>
<evidence type="ECO:0000269" key="6">
    <source>
    </source>
</evidence>
<evidence type="ECO:0000269" key="7">
    <source>
    </source>
</evidence>
<evidence type="ECO:0000303" key="8">
    <source>
    </source>
</evidence>
<evidence type="ECO:0000303" key="9">
    <source>
    </source>
</evidence>
<evidence type="ECO:0000303" key="10">
    <source>
    </source>
</evidence>
<evidence type="ECO:0000312" key="11">
    <source>
        <dbReference type="Araport" id="AT1G07500"/>
    </source>
</evidence>
<evidence type="ECO:0000312" key="12">
    <source>
        <dbReference type="EMBL" id="AAF79549.1"/>
    </source>
</evidence>
<gene>
    <name evidence="8 9 10" type="primary">SMR5</name>
    <name evidence="11" type="ordered locus">At1g07500</name>
    <name evidence="12" type="ORF">F22G5.11</name>
</gene>
<proteinExistence type="evidence at protein level"/>
<protein>
    <recommendedName>
        <fullName evidence="8 9 10">Cyclin-dependent protein kinase inhibitor SMR5</fullName>
    </recommendedName>
    <alternativeName>
        <fullName evidence="8 9 10">Protein SIAMESE-RELATED 5</fullName>
    </alternativeName>
</protein>
<feature type="chain" id="PRO_0000438464" description="Cyclin-dependent protein kinase inhibitor SMR5">
    <location>
        <begin position="1"/>
        <end position="82"/>
    </location>
</feature>
<feature type="region of interest" description="Disordered" evidence="1">
    <location>
        <begin position="1"/>
        <end position="26"/>
    </location>
</feature>
<feature type="compositionally biased region" description="Acidic residues" evidence="1">
    <location>
        <begin position="8"/>
        <end position="18"/>
    </location>
</feature>